<dbReference type="EC" id="2.3.2.27" evidence="2"/>
<dbReference type="EMBL" id="AY850927">
    <property type="protein sequence ID" value="AAX45146.1"/>
    <property type="molecule type" value="mRNA"/>
</dbReference>
<dbReference type="EMBL" id="BC091421">
    <property type="protein sequence ID" value="AAH91421.1"/>
    <property type="molecule type" value="mRNA"/>
</dbReference>
<dbReference type="RefSeq" id="NP_001034115.1">
    <property type="nucleotide sequence ID" value="NM_001039026.1"/>
</dbReference>
<dbReference type="SMR" id="Q2TL32"/>
<dbReference type="BioGRID" id="260504">
    <property type="interactions" value="4"/>
</dbReference>
<dbReference type="FunCoup" id="Q2TL32">
    <property type="interactions" value="3984"/>
</dbReference>
<dbReference type="IntAct" id="Q2TL32">
    <property type="interactions" value="2"/>
</dbReference>
<dbReference type="MINT" id="Q2TL32"/>
<dbReference type="STRING" id="10116.ENSRNOP00000032156"/>
<dbReference type="CarbonylDB" id="Q2TL32"/>
<dbReference type="iPTMnet" id="Q2TL32"/>
<dbReference type="PhosphoSitePlus" id="Q2TL32"/>
<dbReference type="jPOST" id="Q2TL32"/>
<dbReference type="PaxDb" id="10116-ENSRNOP00000032156"/>
<dbReference type="UCSC" id="RGD:1563121">
    <property type="organism name" value="rat"/>
</dbReference>
<dbReference type="AGR" id="RGD:1563121"/>
<dbReference type="RGD" id="1563121">
    <property type="gene designation" value="Ubr4"/>
</dbReference>
<dbReference type="eggNOG" id="KOG1776">
    <property type="taxonomic scope" value="Eukaryota"/>
</dbReference>
<dbReference type="InParanoid" id="Q2TL32"/>
<dbReference type="PhylomeDB" id="Q2TL32"/>
<dbReference type="Reactome" id="R-RNO-6798695">
    <property type="pathway name" value="Neutrophil degranulation"/>
</dbReference>
<dbReference type="Reactome" id="R-RNO-983168">
    <property type="pathway name" value="Antigen processing: Ubiquitination &amp; Proteasome degradation"/>
</dbReference>
<dbReference type="UniPathway" id="UPA00143"/>
<dbReference type="PRO" id="PR:Q2TL32"/>
<dbReference type="Proteomes" id="UP000002494">
    <property type="component" value="Unplaced"/>
</dbReference>
<dbReference type="GO" id="GO:0005813">
    <property type="term" value="C:centrosome"/>
    <property type="evidence" value="ECO:0000318"/>
    <property type="project" value="GO_Central"/>
</dbReference>
<dbReference type="GO" id="GO:0005737">
    <property type="term" value="C:cytoplasm"/>
    <property type="evidence" value="ECO:0000250"/>
    <property type="project" value="UniProtKB"/>
</dbReference>
<dbReference type="GO" id="GO:0005829">
    <property type="term" value="C:cytosol"/>
    <property type="evidence" value="ECO:0000318"/>
    <property type="project" value="GO_Central"/>
</dbReference>
<dbReference type="GO" id="GO:0005768">
    <property type="term" value="C:endosome"/>
    <property type="evidence" value="ECO:0000250"/>
    <property type="project" value="UniProtKB"/>
</dbReference>
<dbReference type="GO" id="GO:0005654">
    <property type="term" value="C:nucleoplasm"/>
    <property type="evidence" value="ECO:0000318"/>
    <property type="project" value="GO_Central"/>
</dbReference>
<dbReference type="GO" id="GO:0005516">
    <property type="term" value="F:calmodulin binding"/>
    <property type="evidence" value="ECO:0000266"/>
    <property type="project" value="RGD"/>
</dbReference>
<dbReference type="GO" id="GO:0061630">
    <property type="term" value="F:ubiquitin protein ligase activity"/>
    <property type="evidence" value="ECO:0000250"/>
    <property type="project" value="UniProtKB"/>
</dbReference>
<dbReference type="GO" id="GO:0004842">
    <property type="term" value="F:ubiquitin-protein transferase activity"/>
    <property type="evidence" value="ECO:0000318"/>
    <property type="project" value="GO_Central"/>
</dbReference>
<dbReference type="GO" id="GO:0008270">
    <property type="term" value="F:zinc ion binding"/>
    <property type="evidence" value="ECO:0007669"/>
    <property type="project" value="UniProtKB-KW"/>
</dbReference>
<dbReference type="GO" id="GO:0140455">
    <property type="term" value="P:cytoplasm protein quality control"/>
    <property type="evidence" value="ECO:0000250"/>
    <property type="project" value="UniProtKB"/>
</dbReference>
<dbReference type="GO" id="GO:0071629">
    <property type="term" value="P:cytoplasm protein quality control by the ubiquitin-proteasome system"/>
    <property type="evidence" value="ECO:0000250"/>
    <property type="project" value="UniProtKB"/>
</dbReference>
<dbReference type="GO" id="GO:0007032">
    <property type="term" value="P:endosome organization"/>
    <property type="evidence" value="ECO:0000250"/>
    <property type="project" value="UniProtKB"/>
</dbReference>
<dbReference type="GO" id="GO:0045717">
    <property type="term" value="P:negative regulation of fatty acid biosynthetic process"/>
    <property type="evidence" value="ECO:0000266"/>
    <property type="project" value="RGD"/>
</dbReference>
<dbReference type="GO" id="GO:0141191">
    <property type="term" value="P:negative regulation of HRI-mediated signaling"/>
    <property type="evidence" value="ECO:0000250"/>
    <property type="project" value="UniProtKB"/>
</dbReference>
<dbReference type="GO" id="GO:0010508">
    <property type="term" value="P:positive regulation of autophagy"/>
    <property type="evidence" value="ECO:0000250"/>
    <property type="project" value="UniProtKB"/>
</dbReference>
<dbReference type="GO" id="GO:0043161">
    <property type="term" value="P:proteasome-mediated ubiquitin-dependent protein catabolic process"/>
    <property type="evidence" value="ECO:0000250"/>
    <property type="project" value="UniProtKB"/>
</dbReference>
<dbReference type="GO" id="GO:0141198">
    <property type="term" value="P:protein branched polyubiquitination"/>
    <property type="evidence" value="ECO:0000250"/>
    <property type="project" value="UniProtKB"/>
</dbReference>
<dbReference type="GO" id="GO:0030163">
    <property type="term" value="P:protein catabolic process"/>
    <property type="evidence" value="ECO:0000266"/>
    <property type="project" value="RGD"/>
</dbReference>
<dbReference type="GO" id="GO:0070979">
    <property type="term" value="P:protein K11-linked ubiquitination"/>
    <property type="evidence" value="ECO:0000250"/>
    <property type="project" value="UniProtKB"/>
</dbReference>
<dbReference type="GO" id="GO:0044314">
    <property type="term" value="P:protein K27-linked ubiquitination"/>
    <property type="evidence" value="ECO:0000250"/>
    <property type="project" value="UniProtKB"/>
</dbReference>
<dbReference type="GO" id="GO:0070936">
    <property type="term" value="P:protein K48-linked ubiquitination"/>
    <property type="evidence" value="ECO:0000250"/>
    <property type="project" value="UniProtKB"/>
</dbReference>
<dbReference type="GO" id="GO:0050821">
    <property type="term" value="P:protein stabilization"/>
    <property type="evidence" value="ECO:0000266"/>
    <property type="project" value="RGD"/>
</dbReference>
<dbReference type="GO" id="GO:0006979">
    <property type="term" value="P:response to oxidative stress"/>
    <property type="evidence" value="ECO:0000266"/>
    <property type="project" value="RGD"/>
</dbReference>
<dbReference type="GO" id="GO:0006511">
    <property type="term" value="P:ubiquitin-dependent protein catabolic process"/>
    <property type="evidence" value="ECO:0000250"/>
    <property type="project" value="UniProtKB"/>
</dbReference>
<dbReference type="GO" id="GO:0071596">
    <property type="term" value="P:ubiquitin-dependent protein catabolic process via the N-end rule pathway"/>
    <property type="evidence" value="ECO:0000266"/>
    <property type="project" value="RGD"/>
</dbReference>
<dbReference type="CDD" id="cd19680">
    <property type="entry name" value="UBR-box_UBR4"/>
    <property type="match status" value="1"/>
</dbReference>
<dbReference type="InterPro" id="IPR016024">
    <property type="entry name" value="ARM-type_fold"/>
</dbReference>
<dbReference type="InterPro" id="IPR025704">
    <property type="entry name" value="E3_Ub_ligase_UBR4_C"/>
</dbReference>
<dbReference type="InterPro" id="IPR045841">
    <property type="entry name" value="E3_UBR4_N"/>
</dbReference>
<dbReference type="InterPro" id="IPR045189">
    <property type="entry name" value="UBR4-like"/>
</dbReference>
<dbReference type="InterPro" id="IPR056530">
    <property type="entry name" value="UBR4-like_dom"/>
</dbReference>
<dbReference type="InterPro" id="IPR047509">
    <property type="entry name" value="UBR4-like_UBR-box"/>
</dbReference>
<dbReference type="InterPro" id="IPR036322">
    <property type="entry name" value="WD40_repeat_dom_sf"/>
</dbReference>
<dbReference type="InterPro" id="IPR003126">
    <property type="entry name" value="Znf_UBR"/>
</dbReference>
<dbReference type="PANTHER" id="PTHR21725">
    <property type="entry name" value="E3 UBIQUITIN-PROTEIN LIGASE UBR4"/>
    <property type="match status" value="1"/>
</dbReference>
<dbReference type="PANTHER" id="PTHR21725:SF1">
    <property type="entry name" value="E3 UBIQUITIN-PROTEIN LIGASE UBR4"/>
    <property type="match status" value="1"/>
</dbReference>
<dbReference type="Pfam" id="PF13764">
    <property type="entry name" value="E3_UbLigase_R4"/>
    <property type="match status" value="1"/>
</dbReference>
<dbReference type="Pfam" id="PF19423">
    <property type="entry name" value="E3_UBR4_N"/>
    <property type="match status" value="1"/>
</dbReference>
<dbReference type="Pfam" id="PF24079">
    <property type="entry name" value="UBR4"/>
    <property type="match status" value="1"/>
</dbReference>
<dbReference type="Pfam" id="PF02207">
    <property type="entry name" value="zf-UBR"/>
    <property type="match status" value="1"/>
</dbReference>
<dbReference type="SMART" id="SM00396">
    <property type="entry name" value="ZnF_UBR1"/>
    <property type="match status" value="1"/>
</dbReference>
<dbReference type="SUPFAM" id="SSF48371">
    <property type="entry name" value="ARM repeat"/>
    <property type="match status" value="1"/>
</dbReference>
<dbReference type="SUPFAM" id="SSF50978">
    <property type="entry name" value="WD40 repeat-like"/>
    <property type="match status" value="1"/>
</dbReference>
<dbReference type="PROSITE" id="PS52043">
    <property type="entry name" value="UBR4_E3"/>
    <property type="match status" value="1"/>
</dbReference>
<dbReference type="PROSITE" id="PS51157">
    <property type="entry name" value="ZF_UBR"/>
    <property type="match status" value="1"/>
</dbReference>
<comment type="function">
    <text evidence="2">E3 ubiquitin-protein ligase involved in different protein quality control pathways in the cytoplasm. Component of the N-end rule pathway: ubiquitinates proteins bearing specific N-terminal residues that are destabilizing according to the N-end rule, leading to their degradation. Recognizes both type-1 and type-2 N-degrons, containing positively charged amino acids (Arg, Lys and His) and bulky and hydrophobic amino acids, respectively. Does not ubiquitinate proteins that are acetylated at the N-terminus. Together with UBR5, part of a cytoplasm protein quality control pathway that prevents protein aggregation by catalyzing assembly of heterotypic 'Lys-11'-/'Lys-48'-linked branched ubiquitin chains on aggregated proteins, leading to substrate recognition by the segregase p97/VCP and degradation by the proteasome: UBR4 probably synthesizes mixed chains containing multiple linkages, while UBR5 is likely branching multiple 'Lys-48'-linked chains of substrates initially modified. Together with KCMF1, part of a protein quality control pathway that catalyzes ubiquitination and degradation of proteins that have been oxidized in response to reactive oxygen species (ROS): recognizes proteins with an Arg-CysO3(H) degron at the N-terminus, and mediates assembly of heterotypic 'Lys-63'-/'Lys-27'-linked branched ubiquitin chains on oxidized proteins, leading to their degradation by autophagy. Catalytic component of the SIFI complex, a multiprotein complex required to inhibit the mitochondrial stress response after a specific stress event has been resolved: ubiquitinates and degrades (1) components of the HRI-mediated signaling of the integrated stress response, such as DELE1 and EIF2AK1/HRI, as well as (2) unimported mitochondrial precursors. Within the SIFI complex, UBR4 initiates ubiquitin chain that are further elongated or branched by KCMF1. Mediates ubiquitination of ACLY, leading to its subsequent degradation. Together with clathrin, forms meshwork structures involved in membrane morphogenesis and cytoskeletal organization.</text>
</comment>
<comment type="catalytic activity">
    <reaction evidence="2">
        <text>S-ubiquitinyl-[E2 ubiquitin-conjugating enzyme]-L-cysteine + [acceptor protein]-L-lysine = [E2 ubiquitin-conjugating enzyme]-L-cysteine + N(6)-ubiquitinyl-[acceptor protein]-L-lysine.</text>
        <dbReference type="EC" id="2.3.2.27"/>
    </reaction>
</comment>
<comment type="pathway">
    <text evidence="2">Protein modification; protein ubiquitination.</text>
</comment>
<comment type="subunit">
    <text evidence="2">Component of the SIFI complex, composed of KCMF1, UBR4 and calmodulin (CALM1, CALM2 or CALM3). Interacts with E2 conjugating enzymes UBE2A and UBE2B. Interacts with RB1.</text>
</comment>
<comment type="subcellular location">
    <subcellularLocation>
        <location evidence="2">Cytoplasm</location>
    </subcellularLocation>
    <subcellularLocation>
        <location evidence="2">Cytoplasm</location>
        <location evidence="2">Cytoskeleton</location>
    </subcellularLocation>
    <subcellularLocation>
        <location evidence="1">Nucleus</location>
    </subcellularLocation>
    <text evidence="1 2">Localizes to endosomes via its association with calcium-bound calmodulin (By similarity). Concentrates at the leading edge of membrane structures involved in actin motility (By similarity).</text>
</comment>
<comment type="domain">
    <text evidence="2">The UBR-type zinc finger forms a pocket that mediates recognition of type 1 N-degrons. It can also recognize type-2 N-degrons via two phenylalanines, Phe-1672 and Phe-1714, on its hydrophobic surface. In addition to substrate-binding, the UBR-type zinc finger probably positions substrate proteins in the proximity of the bound and activated E2-ubiquitin conjugate to enable their ubiquitination.</text>
</comment>
<comment type="domain">
    <text evidence="2">Constitutes an atypical E3 ubiquitin-protein ligase composed of a hemiRING-type zinc finger, a UBR-type zinc-finger interacting subdomain (UZI) and an N-terminal region that can serve as an affinity factor for the E2 conjugating enzymes UBE2A and UBE2B. Compared to classical RING-type, the hemiRING-type only binds a single zinc ion: a hydrogen bonding network is present instead of a second zinc ion. The hemiRING-type zinc finger maintains specificity for E2 conjugating enzymes UBE2A and UBE2B, which have high intrinsic lysine reactivity, obviating the need for the robust thioester activation of classical RING-type E3 ubiquitin-protein ligases.</text>
</comment>
<comment type="similarity">
    <text evidence="7">Belongs to the UBR4 family.</text>
</comment>
<keyword id="KW-0007">Acetylation</keyword>
<keyword id="KW-0112">Calmodulin-binding</keyword>
<keyword id="KW-0963">Cytoplasm</keyword>
<keyword id="KW-0206">Cytoskeleton</keyword>
<keyword id="KW-0479">Metal-binding</keyword>
<keyword id="KW-0539">Nucleus</keyword>
<keyword id="KW-0597">Phosphoprotein</keyword>
<keyword id="KW-1185">Reference proteome</keyword>
<keyword id="KW-0808">Transferase</keyword>
<keyword id="KW-0833">Ubl conjugation pathway</keyword>
<keyword id="KW-0862">Zinc</keyword>
<keyword id="KW-0863">Zinc-finger</keyword>
<proteinExistence type="evidence at protein level"/>
<reference key="1">
    <citation type="submission" date="2004-12" db="EMBL/GenBank/DDBJ databases">
        <title>Expression and characterization of a zinc-finger containing gene (ZUBR1) induced by bright cyclic light.</title>
        <authorList>
            <person name="Zhang Q."/>
            <person name="Anderson R.E."/>
        </authorList>
    </citation>
    <scope>NUCLEOTIDE SEQUENCE [MRNA]</scope>
    <source>
        <strain>Sprague-Dawley</strain>
        <tissue>Retina</tissue>
    </source>
</reference>
<reference key="2">
    <citation type="journal article" date="2004" name="Genome Res.">
        <title>The status, quality, and expansion of the NIH full-length cDNA project: the Mammalian Gene Collection (MGC).</title>
        <authorList>
            <consortium name="The MGC Project Team"/>
        </authorList>
    </citation>
    <scope>NUCLEOTIDE SEQUENCE [LARGE SCALE MRNA] OF 4841-5194</scope>
    <source>
        <tissue>Spleen</tissue>
    </source>
</reference>
<reference key="3">
    <citation type="journal article" date="2006" name="Proc. Natl. Acad. Sci. U.S.A.">
        <title>Quantitative phosphoproteomics of vasopressin-sensitive renal cells: regulation of aquaporin-2 phosphorylation at two sites.</title>
        <authorList>
            <person name="Hoffert J.D."/>
            <person name="Pisitkun T."/>
            <person name="Wang G."/>
            <person name="Shen R.-F."/>
            <person name="Knepper M.A."/>
        </authorList>
    </citation>
    <scope>PHOSPHORYLATION [LARGE SCALE ANALYSIS] AT SER-1403</scope>
    <scope>IDENTIFICATION BY MASS SPECTROMETRY [LARGE SCALE ANALYSIS]</scope>
</reference>
<reference key="4">
    <citation type="journal article" date="2012" name="Nat. Commun.">
        <title>Quantitative maps of protein phosphorylation sites across 14 different rat organs and tissues.</title>
        <authorList>
            <person name="Lundby A."/>
            <person name="Secher A."/>
            <person name="Lage K."/>
            <person name="Nordsborg N.B."/>
            <person name="Dmytriyev A."/>
            <person name="Lundby C."/>
            <person name="Olsen J.V."/>
        </authorList>
    </citation>
    <scope>PHOSPHORYLATION [LARGE SCALE ANALYSIS] AT SER-178; SER-181; SER-1755; SER-2719; SER-2722 AND THR-2724</scope>
    <scope>IDENTIFICATION BY MASS SPECTROMETRY [LARGE SCALE ANALYSIS]</scope>
</reference>
<gene>
    <name evidence="8" type="primary">Ubr4</name>
    <name type="synonym">Rbaf600</name>
    <name evidence="6" type="synonym">Zubr1</name>
</gene>
<feature type="chain" id="PRO_0000286863" description="E3 ubiquitin-protein ligase UBR4">
    <location>
        <begin position="1"/>
        <end position="5194"/>
    </location>
</feature>
<feature type="domain" description="UZI" evidence="4">
    <location>
        <begin position="4963"/>
        <end position="5193"/>
    </location>
</feature>
<feature type="zinc finger region" description="UBR-type" evidence="3">
    <location>
        <begin position="1657"/>
        <end position="1730"/>
    </location>
</feature>
<feature type="zinc finger region" description="HemiRING-type" evidence="4">
    <location>
        <begin position="4846"/>
        <end position="4960"/>
    </location>
</feature>
<feature type="region of interest" description="Disordered" evidence="5">
    <location>
        <begin position="1"/>
        <end position="26"/>
    </location>
</feature>
<feature type="region of interest" description="Disordered" evidence="5">
    <location>
        <begin position="549"/>
        <end position="588"/>
    </location>
</feature>
<feature type="region of interest" description="Disordered" evidence="5">
    <location>
        <begin position="601"/>
        <end position="638"/>
    </location>
</feature>
<feature type="region of interest" description="Disordered" evidence="5">
    <location>
        <begin position="2431"/>
        <end position="2468"/>
    </location>
</feature>
<feature type="region of interest" description="Disordered" evidence="5">
    <location>
        <begin position="2711"/>
        <end position="2764"/>
    </location>
</feature>
<feature type="region of interest" description="Disordered" evidence="5">
    <location>
        <begin position="2875"/>
        <end position="2979"/>
    </location>
</feature>
<feature type="region of interest" description="Disordered" evidence="5">
    <location>
        <begin position="3357"/>
        <end position="3396"/>
    </location>
</feature>
<feature type="region of interest" description="UBR4 E3 catalytic module" evidence="4">
    <location>
        <begin position="4728"/>
        <end position="5193"/>
    </location>
</feature>
<feature type="compositionally biased region" description="Low complexity" evidence="5">
    <location>
        <begin position="1"/>
        <end position="20"/>
    </location>
</feature>
<feature type="compositionally biased region" description="Low complexity" evidence="5">
    <location>
        <begin position="555"/>
        <end position="566"/>
    </location>
</feature>
<feature type="compositionally biased region" description="Acidic residues" evidence="5">
    <location>
        <begin position="570"/>
        <end position="588"/>
    </location>
</feature>
<feature type="compositionally biased region" description="Pro residues" evidence="5">
    <location>
        <begin position="607"/>
        <end position="618"/>
    </location>
</feature>
<feature type="compositionally biased region" description="Polar residues" evidence="5">
    <location>
        <begin position="2443"/>
        <end position="2468"/>
    </location>
</feature>
<feature type="compositionally biased region" description="Polar residues" evidence="5">
    <location>
        <begin position="2716"/>
        <end position="2725"/>
    </location>
</feature>
<feature type="compositionally biased region" description="Acidic residues" evidence="5">
    <location>
        <begin position="2729"/>
        <end position="2738"/>
    </location>
</feature>
<feature type="compositionally biased region" description="Basic and acidic residues" evidence="5">
    <location>
        <begin position="2750"/>
        <end position="2764"/>
    </location>
</feature>
<feature type="compositionally biased region" description="Polar residues" evidence="5">
    <location>
        <begin position="2886"/>
        <end position="2896"/>
    </location>
</feature>
<feature type="compositionally biased region" description="Low complexity" evidence="5">
    <location>
        <begin position="2910"/>
        <end position="2920"/>
    </location>
</feature>
<feature type="compositionally biased region" description="Low complexity" evidence="5">
    <location>
        <begin position="2943"/>
        <end position="2957"/>
    </location>
</feature>
<feature type="compositionally biased region" description="Acidic residues" evidence="5">
    <location>
        <begin position="2962"/>
        <end position="2973"/>
    </location>
</feature>
<feature type="compositionally biased region" description="Low complexity" evidence="5">
    <location>
        <begin position="3357"/>
        <end position="3376"/>
    </location>
</feature>
<feature type="compositionally biased region" description="Basic and acidic residues" evidence="5">
    <location>
        <begin position="3384"/>
        <end position="3393"/>
    </location>
</feature>
<feature type="binding site" evidence="2">
    <location>
        <position position="1663"/>
    </location>
    <ligand>
        <name>Zn(2+)</name>
        <dbReference type="ChEBI" id="CHEBI:29105"/>
        <label>1</label>
    </ligand>
</feature>
<feature type="binding site" evidence="2">
    <location>
        <position position="1680"/>
    </location>
    <ligand>
        <name>Zn(2+)</name>
        <dbReference type="ChEBI" id="CHEBI:29105"/>
        <label>2</label>
    </ligand>
</feature>
<feature type="binding site" evidence="2">
    <location>
        <position position="1683"/>
    </location>
    <ligand>
        <name>Zn(2+)</name>
        <dbReference type="ChEBI" id="CHEBI:29105"/>
        <label>2</label>
    </ligand>
</feature>
<feature type="binding site" evidence="2">
    <location>
        <position position="1692"/>
    </location>
    <ligand>
        <name>Zn(2+)</name>
        <dbReference type="ChEBI" id="CHEBI:29105"/>
        <label>1</label>
    </ligand>
</feature>
<feature type="binding site" evidence="2">
    <location>
        <position position="1695"/>
    </location>
    <ligand>
        <name>Zn(2+)</name>
        <dbReference type="ChEBI" id="CHEBI:29105"/>
        <label>1</label>
    </ligand>
</feature>
<feature type="binding site" evidence="2">
    <location>
        <position position="1695"/>
    </location>
    <ligand>
        <name>Zn(2+)</name>
        <dbReference type="ChEBI" id="CHEBI:29105"/>
        <label>3</label>
    </ligand>
</feature>
<feature type="binding site" evidence="2">
    <location>
        <position position="1699"/>
    </location>
    <ligand>
        <name>Zn(2+)</name>
        <dbReference type="ChEBI" id="CHEBI:29105"/>
        <label>3</label>
    </ligand>
</feature>
<feature type="binding site" evidence="2">
    <location>
        <position position="1700"/>
    </location>
    <ligand>
        <name>Zn(2+)</name>
        <dbReference type="ChEBI" id="CHEBI:29105"/>
        <label>2</label>
    </ligand>
</feature>
<feature type="binding site" evidence="2">
    <location>
        <position position="1703"/>
    </location>
    <ligand>
        <name>Zn(2+)</name>
        <dbReference type="ChEBI" id="CHEBI:29105"/>
        <label>2</label>
    </ligand>
</feature>
<feature type="binding site" evidence="2">
    <location>
        <position position="1715"/>
    </location>
    <ligand>
        <name>Zn(2+)</name>
        <dbReference type="ChEBI" id="CHEBI:29105"/>
        <label>1</label>
    </ligand>
</feature>
<feature type="binding site" evidence="2">
    <location>
        <position position="1717"/>
    </location>
    <ligand>
        <name>Zn(2+)</name>
        <dbReference type="ChEBI" id="CHEBI:29105"/>
        <label>3</label>
    </ligand>
</feature>
<feature type="binding site" evidence="2">
    <location>
        <position position="1725"/>
    </location>
    <ligand>
        <name>Zn(2+)</name>
        <dbReference type="ChEBI" id="CHEBI:29105"/>
        <label>3</label>
    </ligand>
</feature>
<feature type="binding site" evidence="4">
    <location>
        <position position="4849"/>
    </location>
    <ligand>
        <name>Zn(2+)</name>
        <dbReference type="ChEBI" id="CHEBI:29105"/>
        <label>4</label>
    </ligand>
</feature>
<feature type="binding site" evidence="4">
    <location>
        <position position="4852"/>
    </location>
    <ligand>
        <name>Zn(2+)</name>
        <dbReference type="ChEBI" id="CHEBI:29105"/>
        <label>4</label>
    </ligand>
</feature>
<feature type="binding site" evidence="4">
    <location>
        <position position="4898"/>
    </location>
    <ligand>
        <name>Zn(2+)</name>
        <dbReference type="ChEBI" id="CHEBI:29105"/>
        <label>4</label>
    </ligand>
</feature>
<feature type="binding site" evidence="4">
    <location>
        <position position="4901"/>
    </location>
    <ligand>
        <name>Zn(2+)</name>
        <dbReference type="ChEBI" id="CHEBI:29105"/>
        <label>4</label>
    </ligand>
</feature>
<feature type="modified residue" description="Phosphoserine" evidence="10">
    <location>
        <position position="178"/>
    </location>
</feature>
<feature type="modified residue" description="Phosphoserine" evidence="10">
    <location>
        <position position="181"/>
    </location>
</feature>
<feature type="modified residue" description="Phosphoserine" evidence="1">
    <location>
        <position position="212"/>
    </location>
</feature>
<feature type="modified residue" description="Phosphotyrosine" evidence="1">
    <location>
        <position position="370"/>
    </location>
</feature>
<feature type="modified residue" description="N6-acetyllysine" evidence="2">
    <location>
        <position position="1085"/>
    </location>
</feature>
<feature type="modified residue" description="Phosphoserine" evidence="9">
    <location>
        <position position="1403"/>
    </location>
</feature>
<feature type="modified residue" description="Phosphoserine" evidence="2">
    <location>
        <position position="1648"/>
    </location>
</feature>
<feature type="modified residue" description="Phosphoserine" evidence="2">
    <location>
        <position position="1653"/>
    </location>
</feature>
<feature type="modified residue" description="Phosphoserine" evidence="2">
    <location>
        <position position="1748"/>
    </location>
</feature>
<feature type="modified residue" description="Phosphoserine" evidence="10">
    <location>
        <position position="1755"/>
    </location>
</feature>
<feature type="modified residue" description="Phosphoserine" evidence="2">
    <location>
        <position position="1878"/>
    </location>
</feature>
<feature type="modified residue" description="Phosphoserine" evidence="2">
    <location>
        <position position="1904"/>
    </location>
</feature>
<feature type="modified residue" description="Phosphothreonine" evidence="2">
    <location>
        <position position="2715"/>
    </location>
</feature>
<feature type="modified residue" description="Phosphoserine" evidence="10">
    <location>
        <position position="2719"/>
    </location>
</feature>
<feature type="modified residue" description="Phosphoserine" evidence="10">
    <location>
        <position position="2722"/>
    </location>
</feature>
<feature type="modified residue" description="Phosphothreonine" evidence="10">
    <location>
        <position position="2724"/>
    </location>
</feature>
<feature type="modified residue" description="Phosphothreonine" evidence="2">
    <location>
        <position position="2956"/>
    </location>
</feature>
<feature type="modified residue" description="Phosphoserine" evidence="2">
    <location>
        <position position="2964"/>
    </location>
</feature>
<accession>Q2TL32</accession>
<accession>Q5BJM4</accession>
<protein>
    <recommendedName>
        <fullName evidence="7">E3 ubiquitin-protein ligase UBR4</fullName>
        <ecNumber evidence="2">2.3.2.27</ecNumber>
    </recommendedName>
    <alternativeName>
        <fullName>N-recognin-4</fullName>
    </alternativeName>
    <alternativeName>
        <fullName evidence="6">Zinc finger UBR1-type protein 1</fullName>
    </alternativeName>
</protein>
<evidence type="ECO:0000250" key="1">
    <source>
        <dbReference type="UniProtKB" id="A2AN08"/>
    </source>
</evidence>
<evidence type="ECO:0000250" key="2">
    <source>
        <dbReference type="UniProtKB" id="Q5T4S7"/>
    </source>
</evidence>
<evidence type="ECO:0000255" key="3">
    <source>
        <dbReference type="PROSITE-ProRule" id="PRU00508"/>
    </source>
</evidence>
<evidence type="ECO:0000255" key="4">
    <source>
        <dbReference type="PROSITE-ProRule" id="PRU01388"/>
    </source>
</evidence>
<evidence type="ECO:0000256" key="5">
    <source>
        <dbReference type="SAM" id="MobiDB-lite"/>
    </source>
</evidence>
<evidence type="ECO:0000303" key="6">
    <source>
    </source>
</evidence>
<evidence type="ECO:0000305" key="7"/>
<evidence type="ECO:0000312" key="8">
    <source>
        <dbReference type="RGD" id="1563121"/>
    </source>
</evidence>
<evidence type="ECO:0007744" key="9">
    <source>
    </source>
</evidence>
<evidence type="ECO:0007744" key="10">
    <source>
    </source>
</evidence>
<name>UBR4_RAT</name>
<organism>
    <name type="scientific">Rattus norvegicus</name>
    <name type="common">Rat</name>
    <dbReference type="NCBI Taxonomy" id="10116"/>
    <lineage>
        <taxon>Eukaryota</taxon>
        <taxon>Metazoa</taxon>
        <taxon>Chordata</taxon>
        <taxon>Craniata</taxon>
        <taxon>Vertebrata</taxon>
        <taxon>Euteleostomi</taxon>
        <taxon>Mammalia</taxon>
        <taxon>Eutheria</taxon>
        <taxon>Euarchontoglires</taxon>
        <taxon>Glires</taxon>
        <taxon>Rodentia</taxon>
        <taxon>Myomorpha</taxon>
        <taxon>Muroidea</taxon>
        <taxon>Muridae</taxon>
        <taxon>Murinae</taxon>
        <taxon>Rattus</taxon>
    </lineage>
</organism>
<sequence>MATSGGEEAAAAAPAPGAPATGQDTTPGWEVAVRPLLSASYSAFEMKELPQLVASVIESESEILHHEKQYEPFYSSFVALSTHYITTVCSLIPRNQLQSVAAACKVLIEFSLLRLENPDEACAVSQKHLILLIKGLCTGCSRLDRTEIITFTAMMKSAKLPQTVKTLSDVEDQKELASPVSPELRQKEVQMNFLNQLTSVFNPRTVPSPPISPQALVEGENDEQSSTEQASAVKTKNVFIAQNVASLQELGGSEKLLRVCLNLPYFLRYINRFQDAVVANSFFIMPATVADATAVRNGFHSLVIDVTMALDTLSLPVLEPLNPSRLQDVTVLSLSCLYAGVSVATCMAILHVGSAQQVRTGSTSSKEEDYESDAATIVQKCLEIYDMIGQAISSSRRAGGEHFQNFQLLGAWCLLNSLFLILHLSPTALADKGKEKDPLAALRVRDILSRTKEGVGSPKLGPGKGHQGFGVLSVILANHAIKLLTSLFQDLQVEALHKGWETDGPPAVLSIMAQSTSTQRVQRLIDSVPLTNLLLTLLSTSYRKACVLQRQRKGSMSSDASASTDSNTYYEDDFSSTEEDSSQDDDSEPILGQWFEETISPSKEKAAPPPPPPPPPLESSPRVKSPSKQASGEKGNILASRKDPELFLGLASNILNFITSSMLNSRNNFIRNYLSVSLSEQHMATLASIIKEVDKDGLKGSSDEDFAAALYHFNHSLVTSDLQSPNLQNTLLQQLGVAPLSSGPWPLYIHPQGLSVLSRLLLIWQHKAGAQGDPDVPECLKVWDRFLTTMKQSALQGVVPSETEDLNIEHLQLLLLIFHSFSEKGRRAILTTLVQSIQELSVNMEVQMRSAPLILARLLLIFDYLLHQYSKAPVYLFEQVQHNLLSPPFGWASGSQDSSSSSRRANIPLYHGFKEVEENWSKHFSSDAAPQPRFYCVLSTEASEEDLNRLDSEACEVLFSKLVKYDELYSSLTALLAAGSQLDTVKRKENKNMTALEACALQYYFLILWRILGILPPSKTYMNQLAMNSPEMSECDILHTLRWSSRLRISSYVSWIKDHLIRQGMRPEHAGSLVELAASKCSSVKYDVEIVEEYFARQISSFCSIDCTTVLQLHEIPSLQSIYTLDAAVSKVQVSLDEHFSKMAAETDPHKSSEITKNLLPATLQLIDTYASFTRAYLLQNLNEEGSTEKPSQEKLHGFAAVLAIGSSRCKANTLGPTLVQNLPSSVQSVCESWNNINTNEFPNIGSWRNAFANDTIPSESYISAVQAAHLGTLCGQSLPLAASLKHALLSLVRLTGDLIVWSDEMNPAQVIRALLPLLLESSTESAAEISSNSLERILGPAESDEFLARVYEKLITGCYNILANHADPSSGLDESVLEECLQYLEKQLESSQARKAMEEFFSDGGELVQIMMATANEDLSAKFCNRVLKFFTKLFQLTEKSPNPSLLHLCGSLAQLACVEPVRLQAWLTRMTTSPPKDSDQLEVIQENRQLLQLLTTYIVRENSQVGEGVCAVLLGTLTPMATDMLANGDGTGFPELMVVMATLASAGQGAGHLQLHNAAVDWLGRCKKYLSQKNVVEKLNANVMHGKHVMVLECTCHIMSYLADVTNALSQSNGQGPSHLSVDGEERAIEVDSDWVEELAVEEEDSQAEDSDEDSLCNKLCTFTITQKEFMNQHWYHCHTCKMVDGVGVCTVCAKVCHKDHEISYAKYGSFFCDCGAKEDGSCLALVKRTPSSGMSSTMKESAFQSEPRVSESLVRHASTSPADKAKVTISDGKVADEEKPKKSSLCRTVEGCREELQNQANFSFAPLVLDMLNFLMDAIQTNFQQASAVGSSSRAQQALSELHTVDKVVEMTDQLMVPTLGSQEGAFENVRMNYSGDQGQTIRQLISAHVLRRVAMCVLSSPHGRRQHLAVSHEKGKITVLQLSALLKQADSSKRKLTLTRLASAPVPFTVLSLTGNPCKEDYLAVCGLKDCHVLTFSSSGSVSDHLVLHPQLATGNFIIKAVWLPGSQTELAIVTADFVKIYDLSVDALSPTFYFLLPSSKIRDVTFLFNEEGKNIIVIMSSAGYMYTQLMEEASSAQQGPFYVTNVLEINHEDLKDSNSQVAGGGVSVYYSHVLQMLFFSYSQGKSFAATVSRSTLEVLQLFPINIKSSNGGSKTSPALCQWSEVMNHPGLVCCVQQTTGVPLVVMVKPDTFLIQEIKTLPAKAKIQDMVAIRHTACNEQQRTTMILLCEDGSLRIYMANVENTSYWLQPSLQPSSVISIMKPVRKRKTATITARTSSQVTFPIDFFEHNQQLTDVEFGGNDLLQVYNAQQIKHRLNSTGMYVANTKPGGFTMEISNNSSTMVMTGMRIQIGTQAIERAPSYIEIFGRTMQLNLSRSRWFDFPFTREEALQADRKLNLFIGASVDPAGVTMIDAVKIYGKTKEQFGWPDEPPEDFPSASVSSVCPPNLNQSNSTGDSDSAAPATTSGTVLERLVVSSLEALESCFAVGPIIEKERNKHAAQELATLLLSLPAPASVQQQSKSLLASLHSSRSAYHSHKDQALLSKAVQCLNTSSKEGKDLDPEVFQRLVITARSIAVTRPNNLVHFTESKLPQMETEGAEEGKEPQKQVEGDGCSFITQLVNHFWKLHASKPKNAFLAPACLPGLTHIEATVNALVDIIHGYCTCELDCINTASKIYMQMLLCPDPAVSFSCKQALIRVLRPRNKRRHVTLPSSPRSNTPMGDKDDDDDDDADEKMQSSGIPDGGHIRQESQEQSEVDHGDFEMVSESMVLETAENVNNGNPSPLEALLAGAEGFPPMLDIPPDADDETMVELAIALSLQQDQQGSSSSALGLQSLGLSGQAPSSSSLDAGTLSDTTASGVCACNSSVTLSAPASDDEGSTAATDGSTLRTSPADHGGSVGSESGGSAVDSVAGEHSVSGRSSAYGDATAEGHPAGPGSVSSSTGAISTTTGHQEGDGSEGEGEGEAEGDVHTSNRLHMVRLMLLERLLQTLPQLRNVGGVRAIPYMQVILMLTTDLDGEDEKDKGALDNLLAQLIAELGMDKKDVSKKNERSALNEVHLVVMRLLSVFMSRTKSGSKSSICESSSLISSATAAALLSSGAVDYCLHVLKSLLEYWKGQQSEEEPVTTSQLLKPHTTSSPPDMSPFFLRQYVKGHAADVFEAYTQLLTEMVLRLPYQIKKIADTSSRIPPPVFDHSWFYFLSEYLMIQQTPFVRRQVRKLLLFICGSKEKYRQLRDLHTLDSHVRGIKKLLEEQGIFLRASVVTASSGSALQYDTLISLMEHLKACAEIAAQRTINWQKFCIKDDSVLYFLLQVSFLVDEGVSPVLLQLLSCALCGSKVLAALAASTGSSSVASSAPPAASSGQTTTQSKSSTKKSKKEKKEKEKEGESSGSQEDQLCTALVNQLNRFADKETLIQFLRCFLLESNSSSVRWQAHCLTLHIYRNSNKAQQELLLDLMWSIWPELPAYGRKAAQFVDLLGYFSLKTAQTEKKLKEYSQKAVEILRTQNHILTNHPNSNIYNTLSGLVEFDGYYLESDPCLVCNNPEVPFCYIKLSSIKVDTRYTTTQQVVKLIGSHTISKVTVKIGDLKRTKMVRTINLYYNNRTVQAIVELKNKPARWHKAKKVQLTPGQTEVKIDLPLPIVASNLMIEFADFYENYQASTETLQCPRCSASVPANPGVCGNCGENVYQCHKCRSINYDEKDPFLCNACGFCKYARFDFMLYAKPCCAVDPIENEEDRKKAVSNINTLLDKADRVYHQLMGHRPQLENLLCKVNEAAPEKPQEDSGTAGGISSTSASVNRYILQLAQEYCGDCKNSFDELSKIIQKVFASRKELLEYDLQQREAATKSSRTSVQPTFTASQYRALSVLGCGHTSSTKCYGCASAVTEHCITLLRALATNPALRHILVSQGLIRELFDYNLRRGAAAIREEVRQLMCLLTRDNPEATQQMNDLIIGKVSTALKGHWANPDLASSLQYEMLLLTDSISKEDSCWELRLRCALSLFLMAVNIKTPVVVENITLMCLRILQKLIKPPAPTSKKNKDVPVEALTTVKPYCNEIHAQAQLWLKRDPKASYEAWKKCLPIRGVDGNGKSPSKSELHRLYLTEKYVWRWKQFLSRRGKRTTPLDLKLGHNNWLRQVLFTPATQAARQAACTIVEALASVPSRKQQVLDLLTSYLDELSVAGECAAEYLALYQKLIASCHWKVYLAARGVLPYVGNLITKEIARLLALEEATLSTDLQQGYALKSLTGLLSSFVEVESIKRHFKSRLVGTVLNGYLCLRKLVLQRTKLIDETQDMLLEMLEDMTTGTESETKAFMAVCIETAKRYNLDDYRTPVFIFERLCSIIYPEENEVTEFFVTLEKDPQQEDFLQGRMPGNPYSSNEPGIGPLMRDIKNKICQDCDLVALLEDDSGMELLVNNKIISLDLPVAEVYKKVWCTTNEGEPMRIVYRMRGLLGDATEEFIESLDSTTDEEEDEEEVYRMAGVMAQCGGLQCMLNRLAGVKDFKQGRHLLTVLLKLFSYCVKVKVNRQQLVKLEMNTLNVMLGTLNLALVAEQESKDSGGAAVAEQVLSIMEIILDESNAEPLSEDKGNLLLTGDKDQLVMLLDQINSTFVRSNPSVLQGLLRIIPYLSFGEVEKMQILVERFKPYCSFDKYDEDHSGDDKVFLDCFCKIAAGIKNNSNGHQLKDLILQKGITQSALDYMKKHIPSAKNLDADIWKKFLSRPALPFILRLLRGLAMQHPATQVLIGTDSITSLHKLEQVSSDEGIGTLAENLLEALREHPDVNKKIDAARRETRAEKKRMAMAMRQKALGTLGMTTNEKGQVVTKTALLKQMEELIEEPGLTCCICREGYKFQPTKVLGIYTFTKRVALEEMENKPRKQQGYSTVSHFNIVHYDCHLAAVRLARGREEWESAALQNANTKCNGLLPVWGPHVPESAFATCLARHNTYLQECTGQREPTYQLNIHDIKLLFLRFAMEQSFSADTGGGGRESNIHLIPYIIHTVLYVLNTTRATSREEKNLQGFLEQPREKWTESAFDVDGPHYFTILALHVLPPEQWKATRVEILRRLLVASHARAVAPGGATRLTDKAVKDYSAYRSSLLFWALVDLIYNMFKKVPTSNTEGGWSCSLAEYIRHNDMPIYEAADKALKTFQEEFMPVETFSEFLDAAGLLSEITDPESFLKDLLNSVP</sequence>